<reference key="1">
    <citation type="submission" date="2006-02" db="EMBL/GenBank/DDBJ databases">
        <authorList>
            <consortium name="NIH - Xenopus Gene Collection (XGC) project"/>
        </authorList>
    </citation>
    <scope>NUCLEOTIDE SEQUENCE [LARGE SCALE MRNA]</scope>
    <source>
        <tissue>Eye</tissue>
    </source>
</reference>
<dbReference type="EC" id="1.14.19.-"/>
<dbReference type="EMBL" id="BC077556">
    <property type="protein sequence ID" value="AAH77556.1"/>
    <property type="molecule type" value="mRNA"/>
</dbReference>
<dbReference type="EMBL" id="BC112948">
    <property type="protein sequence ID" value="AAI12949.1"/>
    <property type="molecule type" value="mRNA"/>
</dbReference>
<dbReference type="RefSeq" id="NP_001086853.1">
    <property type="nucleotide sequence ID" value="NM_001093384.1"/>
</dbReference>
<dbReference type="SMR" id="Q6DDK2"/>
<dbReference type="DNASU" id="446688"/>
<dbReference type="GeneID" id="446688"/>
<dbReference type="KEGG" id="xla:446688"/>
<dbReference type="AGR" id="Xenbase:XB-GENE-1010233"/>
<dbReference type="CTD" id="446688"/>
<dbReference type="Xenbase" id="XB-GENE-1010233">
    <property type="gene designation" value="fads2.L"/>
</dbReference>
<dbReference type="OMA" id="QWWKNKH"/>
<dbReference type="OrthoDB" id="260091at2759"/>
<dbReference type="UniPathway" id="UPA00658"/>
<dbReference type="Proteomes" id="UP000186698">
    <property type="component" value="Chromosome 4L"/>
</dbReference>
<dbReference type="Bgee" id="446688">
    <property type="expression patterns" value="Expressed in brain and 12 other cell types or tissues"/>
</dbReference>
<dbReference type="GO" id="GO:0005789">
    <property type="term" value="C:endoplasmic reticulum membrane"/>
    <property type="evidence" value="ECO:0007669"/>
    <property type="project" value="UniProtKB-SubCell"/>
</dbReference>
<dbReference type="GO" id="GO:0016717">
    <property type="term" value="F:oxidoreductase activity, acting on paired donors, with oxidation of a pair of donors resulting in the reduction of molecular oxygen to two molecules of water"/>
    <property type="evidence" value="ECO:0000318"/>
    <property type="project" value="GO_Central"/>
</dbReference>
<dbReference type="GO" id="GO:0006629">
    <property type="term" value="P:lipid metabolic process"/>
    <property type="evidence" value="ECO:0000318"/>
    <property type="project" value="GO_Central"/>
</dbReference>
<dbReference type="GO" id="GO:0006636">
    <property type="term" value="P:unsaturated fatty acid biosynthetic process"/>
    <property type="evidence" value="ECO:0007669"/>
    <property type="project" value="UniProtKB-UniPathway"/>
</dbReference>
<dbReference type="CDD" id="cd03506">
    <property type="entry name" value="Delta6-FADS-like"/>
    <property type="match status" value="1"/>
</dbReference>
<dbReference type="FunFam" id="3.10.120.10:FF:000010">
    <property type="entry name" value="Delta-6 fatty acyl desaturase"/>
    <property type="match status" value="1"/>
</dbReference>
<dbReference type="Gene3D" id="3.10.120.10">
    <property type="entry name" value="Cytochrome b5-like heme/steroid binding domain"/>
    <property type="match status" value="1"/>
</dbReference>
<dbReference type="InterPro" id="IPR001199">
    <property type="entry name" value="Cyt_B5-like_heme/steroid-bd"/>
</dbReference>
<dbReference type="InterPro" id="IPR036400">
    <property type="entry name" value="Cyt_B5-like_heme/steroid_sf"/>
</dbReference>
<dbReference type="InterPro" id="IPR005804">
    <property type="entry name" value="FA_desaturase_dom"/>
</dbReference>
<dbReference type="InterPro" id="IPR012171">
    <property type="entry name" value="Fatty_acid_desaturase"/>
</dbReference>
<dbReference type="PANTHER" id="PTHR19353:SF12">
    <property type="entry name" value="ACYL-COA 6-DESATURASE"/>
    <property type="match status" value="1"/>
</dbReference>
<dbReference type="PANTHER" id="PTHR19353">
    <property type="entry name" value="FATTY ACID DESATURASE 2"/>
    <property type="match status" value="1"/>
</dbReference>
<dbReference type="Pfam" id="PF00173">
    <property type="entry name" value="Cyt-b5"/>
    <property type="match status" value="1"/>
</dbReference>
<dbReference type="Pfam" id="PF00487">
    <property type="entry name" value="FA_desaturase"/>
    <property type="match status" value="1"/>
</dbReference>
<dbReference type="PIRSF" id="PIRSF015921">
    <property type="entry name" value="FA_sphinglp_des"/>
    <property type="match status" value="1"/>
</dbReference>
<dbReference type="PRINTS" id="PR00363">
    <property type="entry name" value="CYTOCHROMEB5"/>
</dbReference>
<dbReference type="SMART" id="SM01117">
    <property type="entry name" value="Cyt-b5"/>
    <property type="match status" value="1"/>
</dbReference>
<dbReference type="SUPFAM" id="SSF55856">
    <property type="entry name" value="Cytochrome b5-like heme/steroid binding domain"/>
    <property type="match status" value="1"/>
</dbReference>
<dbReference type="PROSITE" id="PS50255">
    <property type="entry name" value="CYTOCHROME_B5_2"/>
    <property type="match status" value="1"/>
</dbReference>
<gene>
    <name type="primary">fads2</name>
</gene>
<proteinExistence type="evidence at transcript level"/>
<sequence length="446" mass="52314">MGMGGQSGEGCSSGDCVKPEAQYSWEEIQKHNLKTDKWLVIERKVYNISQWVKRHPGGMRIIGHYAGEDATDAFHAFHPDKTFVRKFLKPLYIGELAENEPSQDRDKNAQQVEDFRALRKTAEDMRLFKSNPAFFIFYLFHILLIEFLAWCTLHYLGTGWIPAIITVLLLTISQAQAGWLQHDFGHLSVFEKSKWNHLVHKFVIGHLKGASANWWNHRHFQHHAKPNIFSKDPDVNMVNVFVLGGTQPVEFGKKGIKYLPYNHQHLYFFLIGPPLLIPVYFTVQIIKTMIARKDWVDLAWSVSYYVRFFFTFVPFFGVLGSLALLNAVRFFESHWFVWVTQMNHLPMAIEHEKYQDWLNTQLAATCNIEPSFFNDWFSGHLNFQIEHHLFPTMPRHNYWKIAPLVRSLCSKYNVTYEEKCLYHGFRDVLRSLKKSGQLWLDAYLHK</sequence>
<organism>
    <name type="scientific">Xenopus laevis</name>
    <name type="common">African clawed frog</name>
    <dbReference type="NCBI Taxonomy" id="8355"/>
    <lineage>
        <taxon>Eukaryota</taxon>
        <taxon>Metazoa</taxon>
        <taxon>Chordata</taxon>
        <taxon>Craniata</taxon>
        <taxon>Vertebrata</taxon>
        <taxon>Euteleostomi</taxon>
        <taxon>Amphibia</taxon>
        <taxon>Batrachia</taxon>
        <taxon>Anura</taxon>
        <taxon>Pipoidea</taxon>
        <taxon>Pipidae</taxon>
        <taxon>Xenopodinae</taxon>
        <taxon>Xenopus</taxon>
        <taxon>Xenopus</taxon>
    </lineage>
</organism>
<name>FADS2_XENLA</name>
<feature type="chain" id="PRO_0000307106" description="Fatty acid desaturase 2">
    <location>
        <begin position="1"/>
        <end position="446"/>
    </location>
</feature>
<feature type="topological domain" description="Cytoplasmic" evidence="2">
    <location>
        <begin position="1"/>
        <end position="132"/>
    </location>
</feature>
<feature type="transmembrane region" description="Helical" evidence="2">
    <location>
        <begin position="133"/>
        <end position="153"/>
    </location>
</feature>
<feature type="topological domain" description="Lumenal" evidence="2">
    <location>
        <position position="154"/>
    </location>
</feature>
<feature type="transmembrane region" description="Helical" evidence="2">
    <location>
        <begin position="155"/>
        <end position="175"/>
    </location>
</feature>
<feature type="topological domain" description="Cytoplasmic" evidence="2">
    <location>
        <begin position="176"/>
        <end position="265"/>
    </location>
</feature>
<feature type="transmembrane region" description="Helical" evidence="2">
    <location>
        <begin position="266"/>
        <end position="286"/>
    </location>
</feature>
<feature type="topological domain" description="Lumenal" evidence="2">
    <location>
        <begin position="287"/>
        <end position="307"/>
    </location>
</feature>
<feature type="transmembrane region" description="Helical" evidence="2">
    <location>
        <begin position="308"/>
        <end position="328"/>
    </location>
</feature>
<feature type="topological domain" description="Cytoplasmic" evidence="2">
    <location>
        <begin position="329"/>
        <end position="446"/>
    </location>
</feature>
<feature type="domain" description="Cytochrome b5 heme-binding" evidence="3">
    <location>
        <begin position="20"/>
        <end position="97"/>
    </location>
</feature>
<feature type="short sequence motif" description="Histidine box-1" evidence="1">
    <location>
        <begin position="182"/>
        <end position="186"/>
    </location>
</feature>
<feature type="short sequence motif" description="Histidine box-2" evidence="1">
    <location>
        <begin position="219"/>
        <end position="223"/>
    </location>
</feature>
<feature type="short sequence motif" description="Histidine box-3" evidence="1">
    <location>
        <begin position="384"/>
        <end position="388"/>
    </location>
</feature>
<keyword id="KW-0249">Electron transport</keyword>
<keyword id="KW-0256">Endoplasmic reticulum</keyword>
<keyword id="KW-0275">Fatty acid biosynthesis</keyword>
<keyword id="KW-0276">Fatty acid metabolism</keyword>
<keyword id="KW-0444">Lipid biosynthesis</keyword>
<keyword id="KW-0443">Lipid metabolism</keyword>
<keyword id="KW-0472">Membrane</keyword>
<keyword id="KW-0560">Oxidoreductase</keyword>
<keyword id="KW-1185">Reference proteome</keyword>
<keyword id="KW-0812">Transmembrane</keyword>
<keyword id="KW-1133">Transmembrane helix</keyword>
<keyword id="KW-0813">Transport</keyword>
<accession>Q6DDK2</accession>
<protein>
    <recommendedName>
        <fullName>Fatty acid desaturase 2</fullName>
        <ecNumber>1.14.19.-</ecNumber>
    </recommendedName>
    <alternativeName>
        <fullName>Delta(6) fatty acid desaturase</fullName>
        <shortName>D6D</shortName>
        <shortName>Delta(6) desaturase</shortName>
        <shortName>Delta-6 desaturase</shortName>
    </alternativeName>
</protein>
<comment type="function">
    <text evidence="1">Component of a lipid metabolic pathway that catalyzes biosynthesis of highly unsaturated fatty acids (HUFA) from precursor essential polyunsaturated fatty acids (PUFA) linoleic acid (LA) (18:2n-6) and alpha-linolenic acid (ALA) (18:3n-3). Catalyzes the first and rate limiting step in this pathway which is the desaturation of LA (18:2n-6) and ALA (18:3n-3) into gamma-linoleic acid (GLA) (18:3n-6) and stearidonic acid (18:4n-3) respectively and other desaturation steps. Highly unsaturated fatty acids (HUFA) play pivotal roles in many biological functions (By similarity).</text>
</comment>
<comment type="pathway">
    <text>Lipid metabolism; polyunsaturated fatty acid biosynthesis.</text>
</comment>
<comment type="subcellular location">
    <subcellularLocation>
        <location evidence="4">Endoplasmic reticulum membrane</location>
        <topology evidence="4">Multi-pass membrane protein</topology>
    </subcellularLocation>
</comment>
<comment type="domain">
    <text>The histidine box domains may contain the active site and/or be involved in metal ion binding.</text>
</comment>
<comment type="similarity">
    <text evidence="4">Belongs to the fatty acid desaturase type 1 family.</text>
</comment>
<evidence type="ECO:0000250" key="1"/>
<evidence type="ECO:0000255" key="2"/>
<evidence type="ECO:0000255" key="3">
    <source>
        <dbReference type="PROSITE-ProRule" id="PRU00279"/>
    </source>
</evidence>
<evidence type="ECO:0000305" key="4"/>